<dbReference type="EMBL" id="AAFI02000023">
    <property type="protein sequence ID" value="EAL68254.1"/>
    <property type="molecule type" value="Genomic_DNA"/>
</dbReference>
<dbReference type="RefSeq" id="XP_642175.1">
    <property type="nucleotide sequence ID" value="XM_637083.1"/>
</dbReference>
<dbReference type="STRING" id="44689.Q54YM7"/>
<dbReference type="PaxDb" id="44689-DDB0237581"/>
<dbReference type="EnsemblProtists" id="EAL68254">
    <property type="protein sequence ID" value="EAL68254"/>
    <property type="gene ID" value="DDB_G0278163"/>
</dbReference>
<dbReference type="GeneID" id="8621382"/>
<dbReference type="KEGG" id="ddi:DDB_G0278163"/>
<dbReference type="dictyBase" id="DDB_G0278163"/>
<dbReference type="VEuPathDB" id="AmoebaDB:DDB_G0278163"/>
<dbReference type="eggNOG" id="ENOG502RI3V">
    <property type="taxonomic scope" value="Eukaryota"/>
</dbReference>
<dbReference type="HOGENOM" id="CLU_1646847_0_0_1"/>
<dbReference type="InParanoid" id="Q54YM7"/>
<dbReference type="OMA" id="HYNECEF"/>
<dbReference type="PhylomeDB" id="Q54YM7"/>
<dbReference type="PRO" id="PR:Q54YM7"/>
<dbReference type="Proteomes" id="UP000002195">
    <property type="component" value="Chromosome 3"/>
</dbReference>
<dbReference type="GO" id="GO:0016020">
    <property type="term" value="C:membrane"/>
    <property type="evidence" value="ECO:0007669"/>
    <property type="project" value="UniProtKB-SubCell"/>
</dbReference>
<dbReference type="InterPro" id="IPR007829">
    <property type="entry name" value="TM2"/>
</dbReference>
<dbReference type="InterPro" id="IPR050932">
    <property type="entry name" value="TM2D1-3-like"/>
</dbReference>
<dbReference type="PANTHER" id="PTHR21016">
    <property type="entry name" value="BETA-AMYLOID BINDING PROTEIN-RELATED"/>
    <property type="match status" value="1"/>
</dbReference>
<dbReference type="PANTHER" id="PTHR21016:SF25">
    <property type="entry name" value="TM2 DOMAIN-CONTAINING PROTEIN DDB_G0277895-RELATED"/>
    <property type="match status" value="1"/>
</dbReference>
<dbReference type="Pfam" id="PF05154">
    <property type="entry name" value="TM2"/>
    <property type="match status" value="1"/>
</dbReference>
<protein>
    <recommendedName>
        <fullName>TM2 domain-containing protein DDB_G0278163</fullName>
    </recommendedName>
</protein>
<accession>Q54YM7</accession>
<sequence length="161" mass="18286">MGHHHHHHGGSGHHHHHHHHGSGHYGGGAVLVTPIVTPVPVVYGSRSSSYCPKSMTVAYVLWFFFGILGFHRLYLGRVGTFFLYFFTAGVFGLGWLFDAFYTHKMVKHYNECEFTKSCVGQSPPATIPIYQSEGAYPTYQQVPQQPPQFYQPQQQQPQYQP</sequence>
<proteinExistence type="inferred from homology"/>
<reference key="1">
    <citation type="journal article" date="2005" name="Nature">
        <title>The genome of the social amoeba Dictyostelium discoideum.</title>
        <authorList>
            <person name="Eichinger L."/>
            <person name="Pachebat J.A."/>
            <person name="Gloeckner G."/>
            <person name="Rajandream M.A."/>
            <person name="Sucgang R."/>
            <person name="Berriman M."/>
            <person name="Song J."/>
            <person name="Olsen R."/>
            <person name="Szafranski K."/>
            <person name="Xu Q."/>
            <person name="Tunggal B."/>
            <person name="Kummerfeld S."/>
            <person name="Madera M."/>
            <person name="Konfortov B.A."/>
            <person name="Rivero F."/>
            <person name="Bankier A.T."/>
            <person name="Lehmann R."/>
            <person name="Hamlin N."/>
            <person name="Davies R."/>
            <person name="Gaudet P."/>
            <person name="Fey P."/>
            <person name="Pilcher K."/>
            <person name="Chen G."/>
            <person name="Saunders D."/>
            <person name="Sodergren E.J."/>
            <person name="Davis P."/>
            <person name="Kerhornou A."/>
            <person name="Nie X."/>
            <person name="Hall N."/>
            <person name="Anjard C."/>
            <person name="Hemphill L."/>
            <person name="Bason N."/>
            <person name="Farbrother P."/>
            <person name="Desany B."/>
            <person name="Just E."/>
            <person name="Morio T."/>
            <person name="Rost R."/>
            <person name="Churcher C.M."/>
            <person name="Cooper J."/>
            <person name="Haydock S."/>
            <person name="van Driessche N."/>
            <person name="Cronin A."/>
            <person name="Goodhead I."/>
            <person name="Muzny D.M."/>
            <person name="Mourier T."/>
            <person name="Pain A."/>
            <person name="Lu M."/>
            <person name="Harper D."/>
            <person name="Lindsay R."/>
            <person name="Hauser H."/>
            <person name="James K.D."/>
            <person name="Quiles M."/>
            <person name="Madan Babu M."/>
            <person name="Saito T."/>
            <person name="Buchrieser C."/>
            <person name="Wardroper A."/>
            <person name="Felder M."/>
            <person name="Thangavelu M."/>
            <person name="Johnson D."/>
            <person name="Knights A."/>
            <person name="Loulseged H."/>
            <person name="Mungall K.L."/>
            <person name="Oliver K."/>
            <person name="Price C."/>
            <person name="Quail M.A."/>
            <person name="Urushihara H."/>
            <person name="Hernandez J."/>
            <person name="Rabbinowitsch E."/>
            <person name="Steffen D."/>
            <person name="Sanders M."/>
            <person name="Ma J."/>
            <person name="Kohara Y."/>
            <person name="Sharp S."/>
            <person name="Simmonds M.N."/>
            <person name="Spiegler S."/>
            <person name="Tivey A."/>
            <person name="Sugano S."/>
            <person name="White B."/>
            <person name="Walker D."/>
            <person name="Woodward J.R."/>
            <person name="Winckler T."/>
            <person name="Tanaka Y."/>
            <person name="Shaulsky G."/>
            <person name="Schleicher M."/>
            <person name="Weinstock G.M."/>
            <person name="Rosenthal A."/>
            <person name="Cox E.C."/>
            <person name="Chisholm R.L."/>
            <person name="Gibbs R.A."/>
            <person name="Loomis W.F."/>
            <person name="Platzer M."/>
            <person name="Kay R.R."/>
            <person name="Williams J.G."/>
            <person name="Dear P.H."/>
            <person name="Noegel A.A."/>
            <person name="Barrell B.G."/>
            <person name="Kuspa A."/>
        </authorList>
    </citation>
    <scope>NUCLEOTIDE SEQUENCE [LARGE SCALE GENOMIC DNA]</scope>
    <source>
        <strain>AX4</strain>
    </source>
</reference>
<organism>
    <name type="scientific">Dictyostelium discoideum</name>
    <name type="common">Social amoeba</name>
    <dbReference type="NCBI Taxonomy" id="44689"/>
    <lineage>
        <taxon>Eukaryota</taxon>
        <taxon>Amoebozoa</taxon>
        <taxon>Evosea</taxon>
        <taxon>Eumycetozoa</taxon>
        <taxon>Dictyostelia</taxon>
        <taxon>Dictyosteliales</taxon>
        <taxon>Dictyosteliaceae</taxon>
        <taxon>Dictyostelium</taxon>
    </lineage>
</organism>
<gene>
    <name type="ORF">DDB_G0278163</name>
</gene>
<keyword id="KW-0472">Membrane</keyword>
<keyword id="KW-1185">Reference proteome</keyword>
<keyword id="KW-0812">Transmembrane</keyword>
<keyword id="KW-1133">Transmembrane helix</keyword>
<evidence type="ECO:0000255" key="1"/>
<evidence type="ECO:0000256" key="2">
    <source>
        <dbReference type="SAM" id="MobiDB-lite"/>
    </source>
</evidence>
<evidence type="ECO:0000305" key="3"/>
<feature type="chain" id="PRO_0000330736" description="TM2 domain-containing protein DDB_G0278163">
    <location>
        <begin position="1"/>
        <end position="161"/>
    </location>
</feature>
<feature type="topological domain" description="Cytoplasmic" evidence="3">
    <location>
        <begin position="1"/>
        <end position="24"/>
    </location>
</feature>
<feature type="transmembrane region" description="Helical" evidence="1">
    <location>
        <begin position="25"/>
        <end position="45"/>
    </location>
</feature>
<feature type="topological domain" description="Extracellular" evidence="3">
    <location>
        <begin position="46"/>
        <end position="54"/>
    </location>
</feature>
<feature type="transmembrane region" description="Helical" evidence="1">
    <location>
        <begin position="55"/>
        <end position="75"/>
    </location>
</feature>
<feature type="topological domain" description="Cytoplasmic" evidence="3">
    <location>
        <begin position="76"/>
        <end position="80"/>
    </location>
</feature>
<feature type="transmembrane region" description="Helical" evidence="1">
    <location>
        <begin position="81"/>
        <end position="101"/>
    </location>
</feature>
<feature type="topological domain" description="Extracellular" evidence="3">
    <location>
        <begin position="102"/>
        <end position="161"/>
    </location>
</feature>
<feature type="domain" description="TM2" evidence="1">
    <location>
        <begin position="52"/>
        <end position="100"/>
    </location>
</feature>
<feature type="region of interest" description="Disordered" evidence="2">
    <location>
        <begin position="139"/>
        <end position="161"/>
    </location>
</feature>
<comment type="subcellular location">
    <subcellularLocation>
        <location evidence="3">Membrane</location>
        <topology evidence="3">Multi-pass membrane protein</topology>
    </subcellularLocation>
</comment>
<comment type="similarity">
    <text evidence="3">Belongs to the TM2 family.</text>
</comment>
<name>TM2D2_DICDI</name>